<protein>
    <recommendedName>
        <fullName>Oocyte zinc finger protein XlCOF15</fullName>
    </recommendedName>
</protein>
<reference key="1">
    <citation type="journal article" date="1989" name="J. Mol. Biol.">
        <title>Second-order repeats in Xenopus laevis finger proteins.</title>
        <authorList>
            <person name="Nietfeld W."/>
            <person name="El-Baradi T."/>
            <person name="Mentzel H."/>
            <person name="Pieler T."/>
            <person name="Koester M."/>
            <person name="Poeting A."/>
            <person name="Knoechel W."/>
        </authorList>
    </citation>
    <scope>NUCLEOTIDE SEQUENCE</scope>
</reference>
<accession>P18741</accession>
<dbReference type="PIR" id="S06551">
    <property type="entry name" value="S06551"/>
</dbReference>
<dbReference type="SMR" id="P18741"/>
<dbReference type="Proteomes" id="UP000186698">
    <property type="component" value="Unplaced"/>
</dbReference>
<dbReference type="GO" id="GO:0005634">
    <property type="term" value="C:nucleus"/>
    <property type="evidence" value="ECO:0007669"/>
    <property type="project" value="UniProtKB-SubCell"/>
</dbReference>
<dbReference type="GO" id="GO:0003700">
    <property type="term" value="F:DNA-binding transcription factor activity"/>
    <property type="evidence" value="ECO:0007669"/>
    <property type="project" value="TreeGrafter"/>
</dbReference>
<dbReference type="GO" id="GO:0000978">
    <property type="term" value="F:RNA polymerase II cis-regulatory region sequence-specific DNA binding"/>
    <property type="evidence" value="ECO:0007669"/>
    <property type="project" value="TreeGrafter"/>
</dbReference>
<dbReference type="GO" id="GO:0008270">
    <property type="term" value="F:zinc ion binding"/>
    <property type="evidence" value="ECO:0007669"/>
    <property type="project" value="UniProtKB-KW"/>
</dbReference>
<dbReference type="GO" id="GO:0006357">
    <property type="term" value="P:regulation of transcription by RNA polymerase II"/>
    <property type="evidence" value="ECO:0007669"/>
    <property type="project" value="TreeGrafter"/>
</dbReference>
<dbReference type="FunFam" id="3.30.160.60:FF:000759">
    <property type="entry name" value="zinc finger protein 16"/>
    <property type="match status" value="2"/>
</dbReference>
<dbReference type="FunFam" id="3.30.160.60:FF:000295">
    <property type="entry name" value="zinc finger protein 19"/>
    <property type="match status" value="1"/>
</dbReference>
<dbReference type="FunFam" id="3.30.160.60:FF:002716">
    <property type="entry name" value="Zinc finger protein 212"/>
    <property type="match status" value="1"/>
</dbReference>
<dbReference type="FunFam" id="3.30.160.60:FF:002274">
    <property type="entry name" value="Zinc finger protein 432"/>
    <property type="match status" value="1"/>
</dbReference>
<dbReference type="Gene3D" id="3.30.160.60">
    <property type="entry name" value="Classic Zinc Finger"/>
    <property type="match status" value="5"/>
</dbReference>
<dbReference type="InterPro" id="IPR050589">
    <property type="entry name" value="Ikaros_C2H2-ZF"/>
</dbReference>
<dbReference type="InterPro" id="IPR036236">
    <property type="entry name" value="Znf_C2H2_sf"/>
</dbReference>
<dbReference type="InterPro" id="IPR013087">
    <property type="entry name" value="Znf_C2H2_type"/>
</dbReference>
<dbReference type="PANTHER" id="PTHR24404">
    <property type="entry name" value="ZINC FINGER PROTEIN"/>
    <property type="match status" value="1"/>
</dbReference>
<dbReference type="PANTHER" id="PTHR24404:SF41">
    <property type="entry name" value="ZINC FINGER PROTEIN 613"/>
    <property type="match status" value="1"/>
</dbReference>
<dbReference type="Pfam" id="PF00096">
    <property type="entry name" value="zf-C2H2"/>
    <property type="match status" value="4"/>
</dbReference>
<dbReference type="Pfam" id="PF13912">
    <property type="entry name" value="zf-C2H2_6"/>
    <property type="match status" value="1"/>
</dbReference>
<dbReference type="SMART" id="SM00355">
    <property type="entry name" value="ZnF_C2H2"/>
    <property type="match status" value="5"/>
</dbReference>
<dbReference type="SUPFAM" id="SSF57667">
    <property type="entry name" value="beta-beta-alpha zinc fingers"/>
    <property type="match status" value="3"/>
</dbReference>
<dbReference type="PROSITE" id="PS00028">
    <property type="entry name" value="ZINC_FINGER_C2H2_1"/>
    <property type="match status" value="5"/>
</dbReference>
<dbReference type="PROSITE" id="PS50157">
    <property type="entry name" value="ZINC_FINGER_C2H2_2"/>
    <property type="match status" value="5"/>
</dbReference>
<sequence length="140" mass="15859">TGEKPFTCKECSKSFSSNSHLSRHQKIHSGVKSFTCTECDKKFLTRSSLLLHQKVHTGEKPFICTECGKGFSAKSQLHRHHVIHTGDRPFTCAECGKTFSYKQSLVTHRAAHTREKPFICTECGKSFSHKNNLQTHLKSH</sequence>
<feature type="chain" id="PRO_0000047817" description="Oocyte zinc finger protein XlCOF15">
    <location>
        <begin position="1" status="less than"/>
        <end position="140" status="greater than"/>
    </location>
</feature>
<feature type="zinc finger region" description="C2H2-type 1" evidence="1">
    <location>
        <begin position="6"/>
        <end position="28"/>
    </location>
</feature>
<feature type="zinc finger region" description="C2H2-type 2" evidence="1">
    <location>
        <begin position="34"/>
        <end position="56"/>
    </location>
</feature>
<feature type="zinc finger region" description="C2H2-type 3" evidence="1">
    <location>
        <begin position="62"/>
        <end position="84"/>
    </location>
</feature>
<feature type="zinc finger region" description="C2H2-type 4" evidence="1">
    <location>
        <begin position="90"/>
        <end position="112"/>
    </location>
</feature>
<feature type="zinc finger region" description="C2H2-type 5" evidence="1">
    <location>
        <begin position="118"/>
        <end position="140"/>
    </location>
</feature>
<feature type="non-terminal residue">
    <location>
        <position position="1"/>
    </location>
</feature>
<feature type="non-terminal residue">
    <location>
        <position position="140"/>
    </location>
</feature>
<comment type="function">
    <text>May be involved in transcriptional regulation.</text>
</comment>
<comment type="subcellular location">
    <subcellularLocation>
        <location evidence="2">Nucleus</location>
    </subcellularLocation>
</comment>
<comment type="similarity">
    <text evidence="2">Belongs to the krueppel C2H2-type zinc-finger protein family.</text>
</comment>
<organism>
    <name type="scientific">Xenopus laevis</name>
    <name type="common">African clawed frog</name>
    <dbReference type="NCBI Taxonomy" id="8355"/>
    <lineage>
        <taxon>Eukaryota</taxon>
        <taxon>Metazoa</taxon>
        <taxon>Chordata</taxon>
        <taxon>Craniata</taxon>
        <taxon>Vertebrata</taxon>
        <taxon>Euteleostomi</taxon>
        <taxon>Amphibia</taxon>
        <taxon>Batrachia</taxon>
        <taxon>Anura</taxon>
        <taxon>Pipoidea</taxon>
        <taxon>Pipidae</taxon>
        <taxon>Xenopodinae</taxon>
        <taxon>Xenopus</taxon>
        <taxon>Xenopus</taxon>
    </lineage>
</organism>
<evidence type="ECO:0000255" key="1">
    <source>
        <dbReference type="PROSITE-ProRule" id="PRU00042"/>
    </source>
</evidence>
<evidence type="ECO:0000305" key="2"/>
<name>ZO15_XENLA</name>
<keyword id="KW-0238">DNA-binding</keyword>
<keyword id="KW-0479">Metal-binding</keyword>
<keyword id="KW-0539">Nucleus</keyword>
<keyword id="KW-1185">Reference proteome</keyword>
<keyword id="KW-0677">Repeat</keyword>
<keyword id="KW-0804">Transcription</keyword>
<keyword id="KW-0805">Transcription regulation</keyword>
<keyword id="KW-0862">Zinc</keyword>
<keyword id="KW-0863">Zinc-finger</keyword>
<proteinExistence type="inferred from homology"/>